<comment type="function">
    <text evidence="1">Specifically methylates the ribose of guanosine 2251 in 23S rRNA.</text>
</comment>
<comment type="catalytic activity">
    <reaction evidence="1">
        <text>guanosine(2251) in 23S rRNA + S-adenosyl-L-methionine = 2'-O-methylguanosine(2251) in 23S rRNA + S-adenosyl-L-homocysteine + H(+)</text>
        <dbReference type="Rhea" id="RHEA:24140"/>
        <dbReference type="Rhea" id="RHEA-COMP:10239"/>
        <dbReference type="Rhea" id="RHEA-COMP:10241"/>
        <dbReference type="ChEBI" id="CHEBI:15378"/>
        <dbReference type="ChEBI" id="CHEBI:57856"/>
        <dbReference type="ChEBI" id="CHEBI:59789"/>
        <dbReference type="ChEBI" id="CHEBI:74269"/>
        <dbReference type="ChEBI" id="CHEBI:74445"/>
        <dbReference type="EC" id="2.1.1.185"/>
    </reaction>
</comment>
<comment type="subcellular location">
    <subcellularLocation>
        <location evidence="1">Cytoplasm</location>
    </subcellularLocation>
</comment>
<comment type="similarity">
    <text evidence="1">Belongs to the class IV-like SAM-binding methyltransferase superfamily. RNA methyltransferase TrmH family. RlmB subfamily.</text>
</comment>
<dbReference type="EC" id="2.1.1.185" evidence="1"/>
<dbReference type="EMBL" id="AE004091">
    <property type="protein sequence ID" value="AAG08321.1"/>
    <property type="molecule type" value="Genomic_DNA"/>
</dbReference>
<dbReference type="PIR" id="B83030">
    <property type="entry name" value="B83030"/>
</dbReference>
<dbReference type="RefSeq" id="NP_253623.1">
    <property type="nucleotide sequence ID" value="NC_002516.2"/>
</dbReference>
<dbReference type="RefSeq" id="WP_003095638.1">
    <property type="nucleotide sequence ID" value="NZ_QZGE01000002.1"/>
</dbReference>
<dbReference type="SMR" id="Q9HUM8"/>
<dbReference type="FunCoup" id="Q9HUM8">
    <property type="interactions" value="555"/>
</dbReference>
<dbReference type="STRING" id="208964.PA4936"/>
<dbReference type="PaxDb" id="208964-PA4936"/>
<dbReference type="GeneID" id="877647"/>
<dbReference type="KEGG" id="pae:PA4936"/>
<dbReference type="PATRIC" id="fig|208964.12.peg.5169"/>
<dbReference type="PseudoCAP" id="PA4936"/>
<dbReference type="HOGENOM" id="CLU_021322_0_1_6"/>
<dbReference type="InParanoid" id="Q9HUM8"/>
<dbReference type="OrthoDB" id="9785673at2"/>
<dbReference type="PhylomeDB" id="Q9HUM8"/>
<dbReference type="BioCyc" id="PAER208964:G1FZ6-5050-MONOMER"/>
<dbReference type="Proteomes" id="UP000002438">
    <property type="component" value="Chromosome"/>
</dbReference>
<dbReference type="GO" id="GO:0005829">
    <property type="term" value="C:cytosol"/>
    <property type="evidence" value="ECO:0000318"/>
    <property type="project" value="GO_Central"/>
</dbReference>
<dbReference type="GO" id="GO:0003723">
    <property type="term" value="F:RNA binding"/>
    <property type="evidence" value="ECO:0007669"/>
    <property type="project" value="InterPro"/>
</dbReference>
<dbReference type="GO" id="GO:0070039">
    <property type="term" value="F:rRNA (guanosine-2'-O-)-methyltransferase activity"/>
    <property type="evidence" value="ECO:0000318"/>
    <property type="project" value="GO_Central"/>
</dbReference>
<dbReference type="CDD" id="cd18103">
    <property type="entry name" value="SpoU-like_RlmB"/>
    <property type="match status" value="1"/>
</dbReference>
<dbReference type="FunFam" id="3.40.1280.10:FF:000005">
    <property type="entry name" value="23S rRNA (guanosine-2'-O-)-methyltransferase RlmB"/>
    <property type="match status" value="1"/>
</dbReference>
<dbReference type="Gene3D" id="3.30.1330.30">
    <property type="match status" value="1"/>
</dbReference>
<dbReference type="Gene3D" id="3.40.1280.10">
    <property type="match status" value="1"/>
</dbReference>
<dbReference type="HAMAP" id="MF_01887">
    <property type="entry name" value="23SrRNA_methyltr_B"/>
    <property type="match status" value="1"/>
</dbReference>
<dbReference type="InterPro" id="IPR024915">
    <property type="entry name" value="23S_rRNA_MeTrfase_RlmB"/>
</dbReference>
<dbReference type="InterPro" id="IPR029028">
    <property type="entry name" value="Alpha/beta_knot_MTases"/>
</dbReference>
<dbReference type="InterPro" id="IPR029064">
    <property type="entry name" value="Ribosomal_eL30-like_sf"/>
</dbReference>
<dbReference type="InterPro" id="IPR004441">
    <property type="entry name" value="rRNA_MeTrfase_TrmH"/>
</dbReference>
<dbReference type="InterPro" id="IPR001537">
    <property type="entry name" value="SpoU_MeTrfase"/>
</dbReference>
<dbReference type="InterPro" id="IPR013123">
    <property type="entry name" value="SpoU_subst-bd"/>
</dbReference>
<dbReference type="InterPro" id="IPR029026">
    <property type="entry name" value="tRNA_m1G_MTases_N"/>
</dbReference>
<dbReference type="NCBIfam" id="NF008386">
    <property type="entry name" value="PRK11181.1"/>
    <property type="match status" value="1"/>
</dbReference>
<dbReference type="NCBIfam" id="TIGR00186">
    <property type="entry name" value="rRNA_methyl_3"/>
    <property type="match status" value="1"/>
</dbReference>
<dbReference type="PANTHER" id="PTHR46429">
    <property type="entry name" value="23S RRNA (GUANOSINE-2'-O-)-METHYLTRANSFERASE RLMB"/>
    <property type="match status" value="1"/>
</dbReference>
<dbReference type="PANTHER" id="PTHR46429:SF1">
    <property type="entry name" value="23S RRNA (GUANOSINE-2'-O-)-METHYLTRANSFERASE RLMB"/>
    <property type="match status" value="1"/>
</dbReference>
<dbReference type="Pfam" id="PF00588">
    <property type="entry name" value="SpoU_methylase"/>
    <property type="match status" value="1"/>
</dbReference>
<dbReference type="Pfam" id="PF08032">
    <property type="entry name" value="SpoU_sub_bind"/>
    <property type="match status" value="1"/>
</dbReference>
<dbReference type="SMART" id="SM00967">
    <property type="entry name" value="SpoU_sub_bind"/>
    <property type="match status" value="1"/>
</dbReference>
<dbReference type="SUPFAM" id="SSF75217">
    <property type="entry name" value="alpha/beta knot"/>
    <property type="match status" value="1"/>
</dbReference>
<dbReference type="SUPFAM" id="SSF55315">
    <property type="entry name" value="L30e-like"/>
    <property type="match status" value="1"/>
</dbReference>
<gene>
    <name evidence="1" type="primary">rlmB</name>
    <name type="ordered locus">PA4936</name>
</gene>
<accession>Q9HUM8</accession>
<protein>
    <recommendedName>
        <fullName evidence="1">23S rRNA (guanosine-2'-O-)-methyltransferase RlmB</fullName>
        <ecNumber evidence="1">2.1.1.185</ecNumber>
    </recommendedName>
    <alternativeName>
        <fullName evidence="1">23S rRNA (guanosine2251 2'-O)-methyltransferase</fullName>
    </alternativeName>
    <alternativeName>
        <fullName evidence="1">23S rRNA Gm2251 2'-O-methyltransferase</fullName>
    </alternativeName>
</protein>
<keyword id="KW-0963">Cytoplasm</keyword>
<keyword id="KW-0489">Methyltransferase</keyword>
<keyword id="KW-1185">Reference proteome</keyword>
<keyword id="KW-0698">rRNA processing</keyword>
<keyword id="KW-0949">S-adenosyl-L-methionine</keyword>
<keyword id="KW-0808">Transferase</keyword>
<sequence>MSQWEKVYGVHAVEALLRHHPKRVKQLWLAEGRHDPRVQVLTELAAGFRIPVGQRDRRELDEWAEGVHQGVVAEVSPSQVWGENMLEELLERSEGVPLLLALDGVTDPHNLGACLRTADAAGVQAVIVPKDKSATLNATVRKVACGAAEVIPLVAVTNLARTLEKLQQRGLWVVGTAGEADKTLYQLDLKGPTVLVMGAEGKGMRRLTREHCDFLARLPMAGSVSSLNVSVATGVCLFEILRQRTPLE</sequence>
<organism>
    <name type="scientific">Pseudomonas aeruginosa (strain ATCC 15692 / DSM 22644 / CIP 104116 / JCM 14847 / LMG 12228 / 1C / PRS 101 / PAO1)</name>
    <dbReference type="NCBI Taxonomy" id="208964"/>
    <lineage>
        <taxon>Bacteria</taxon>
        <taxon>Pseudomonadati</taxon>
        <taxon>Pseudomonadota</taxon>
        <taxon>Gammaproteobacteria</taxon>
        <taxon>Pseudomonadales</taxon>
        <taxon>Pseudomonadaceae</taxon>
        <taxon>Pseudomonas</taxon>
    </lineage>
</organism>
<name>RLMB_PSEAE</name>
<evidence type="ECO:0000255" key="1">
    <source>
        <dbReference type="HAMAP-Rule" id="MF_01887"/>
    </source>
</evidence>
<reference key="1">
    <citation type="journal article" date="2000" name="Nature">
        <title>Complete genome sequence of Pseudomonas aeruginosa PAO1, an opportunistic pathogen.</title>
        <authorList>
            <person name="Stover C.K."/>
            <person name="Pham X.-Q.T."/>
            <person name="Erwin A.L."/>
            <person name="Mizoguchi S.D."/>
            <person name="Warrener P."/>
            <person name="Hickey M.J."/>
            <person name="Brinkman F.S.L."/>
            <person name="Hufnagle W.O."/>
            <person name="Kowalik D.J."/>
            <person name="Lagrou M."/>
            <person name="Garber R.L."/>
            <person name="Goltry L."/>
            <person name="Tolentino E."/>
            <person name="Westbrock-Wadman S."/>
            <person name="Yuan Y."/>
            <person name="Brody L.L."/>
            <person name="Coulter S.N."/>
            <person name="Folger K.R."/>
            <person name="Kas A."/>
            <person name="Larbig K."/>
            <person name="Lim R.M."/>
            <person name="Smith K.A."/>
            <person name="Spencer D.H."/>
            <person name="Wong G.K.-S."/>
            <person name="Wu Z."/>
            <person name="Paulsen I.T."/>
            <person name="Reizer J."/>
            <person name="Saier M.H. Jr."/>
            <person name="Hancock R.E.W."/>
            <person name="Lory S."/>
            <person name="Olson M.V."/>
        </authorList>
    </citation>
    <scope>NUCLEOTIDE SEQUENCE [LARGE SCALE GENOMIC DNA]</scope>
    <source>
        <strain>ATCC 15692 / DSM 22644 / CIP 104116 / JCM 14847 / LMG 12228 / 1C / PRS 101 / PAO1</strain>
    </source>
</reference>
<feature type="chain" id="PRO_0000159797" description="23S rRNA (guanosine-2'-O-)-methyltransferase RlmB">
    <location>
        <begin position="1"/>
        <end position="248"/>
    </location>
</feature>
<feature type="binding site" evidence="1">
    <location>
        <position position="198"/>
    </location>
    <ligand>
        <name>S-adenosyl-L-methionine</name>
        <dbReference type="ChEBI" id="CHEBI:59789"/>
    </ligand>
</feature>
<feature type="binding site" evidence="1">
    <location>
        <position position="218"/>
    </location>
    <ligand>
        <name>S-adenosyl-L-methionine</name>
        <dbReference type="ChEBI" id="CHEBI:59789"/>
    </ligand>
</feature>
<feature type="binding site" evidence="1">
    <location>
        <position position="227"/>
    </location>
    <ligand>
        <name>S-adenosyl-L-methionine</name>
        <dbReference type="ChEBI" id="CHEBI:59789"/>
    </ligand>
</feature>
<proteinExistence type="inferred from homology"/>